<proteinExistence type="inferred from homology"/>
<organism>
    <name type="scientific">Staphylococcus aureus (strain JH9)</name>
    <dbReference type="NCBI Taxonomy" id="359786"/>
    <lineage>
        <taxon>Bacteria</taxon>
        <taxon>Bacillati</taxon>
        <taxon>Bacillota</taxon>
        <taxon>Bacilli</taxon>
        <taxon>Bacillales</taxon>
        <taxon>Staphylococcaceae</taxon>
        <taxon>Staphylococcus</taxon>
    </lineage>
</organism>
<gene>
    <name evidence="1" type="primary">gatC</name>
    <name type="ordered locus">SaurJH9_1956</name>
</gene>
<evidence type="ECO:0000255" key="1">
    <source>
        <dbReference type="HAMAP-Rule" id="MF_00122"/>
    </source>
</evidence>
<protein>
    <recommendedName>
        <fullName evidence="1">Aspartyl/glutamyl-tRNA(Asn/Gln) amidotransferase subunit C</fullName>
        <shortName evidence="1">Asp/Glu-ADT subunit C</shortName>
        <ecNumber evidence="1">6.3.5.-</ecNumber>
    </recommendedName>
</protein>
<comment type="function">
    <text evidence="1">Allows the formation of correctly charged Asn-tRNA(Asn) or Gln-tRNA(Gln) through the transamidation of misacylated Asp-tRNA(Asn) or Glu-tRNA(Gln) in organisms which lack either or both of asparaginyl-tRNA or glutaminyl-tRNA synthetases. The reaction takes place in the presence of glutamine and ATP through an activated phospho-Asp-tRNA(Asn) or phospho-Glu-tRNA(Gln).</text>
</comment>
<comment type="catalytic activity">
    <reaction evidence="1">
        <text>L-glutamyl-tRNA(Gln) + L-glutamine + ATP + H2O = L-glutaminyl-tRNA(Gln) + L-glutamate + ADP + phosphate + H(+)</text>
        <dbReference type="Rhea" id="RHEA:17521"/>
        <dbReference type="Rhea" id="RHEA-COMP:9681"/>
        <dbReference type="Rhea" id="RHEA-COMP:9684"/>
        <dbReference type="ChEBI" id="CHEBI:15377"/>
        <dbReference type="ChEBI" id="CHEBI:15378"/>
        <dbReference type="ChEBI" id="CHEBI:29985"/>
        <dbReference type="ChEBI" id="CHEBI:30616"/>
        <dbReference type="ChEBI" id="CHEBI:43474"/>
        <dbReference type="ChEBI" id="CHEBI:58359"/>
        <dbReference type="ChEBI" id="CHEBI:78520"/>
        <dbReference type="ChEBI" id="CHEBI:78521"/>
        <dbReference type="ChEBI" id="CHEBI:456216"/>
    </reaction>
</comment>
<comment type="catalytic activity">
    <reaction evidence="1">
        <text>L-aspartyl-tRNA(Asn) + L-glutamine + ATP + H2O = L-asparaginyl-tRNA(Asn) + L-glutamate + ADP + phosphate + 2 H(+)</text>
        <dbReference type="Rhea" id="RHEA:14513"/>
        <dbReference type="Rhea" id="RHEA-COMP:9674"/>
        <dbReference type="Rhea" id="RHEA-COMP:9677"/>
        <dbReference type="ChEBI" id="CHEBI:15377"/>
        <dbReference type="ChEBI" id="CHEBI:15378"/>
        <dbReference type="ChEBI" id="CHEBI:29985"/>
        <dbReference type="ChEBI" id="CHEBI:30616"/>
        <dbReference type="ChEBI" id="CHEBI:43474"/>
        <dbReference type="ChEBI" id="CHEBI:58359"/>
        <dbReference type="ChEBI" id="CHEBI:78515"/>
        <dbReference type="ChEBI" id="CHEBI:78516"/>
        <dbReference type="ChEBI" id="CHEBI:456216"/>
    </reaction>
</comment>
<comment type="subunit">
    <text evidence="1">Heterotrimer of A, B and C subunits.</text>
</comment>
<comment type="similarity">
    <text evidence="1">Belongs to the GatC family.</text>
</comment>
<sequence length="100" mass="11268">MTKVTREEVEHIANLARLQISPEETEEMANTLESILDFAKQNDSADTEGVEPTYHVLDLQNVLREDKAIKGIPQELALKNAKETEDGQFKVPTIMNEEDA</sequence>
<name>GATC_STAA9</name>
<dbReference type="EC" id="6.3.5.-" evidence="1"/>
<dbReference type="EMBL" id="CP000703">
    <property type="protein sequence ID" value="ABQ49741.1"/>
    <property type="molecule type" value="Genomic_DNA"/>
</dbReference>
<dbReference type="RefSeq" id="WP_000170162.1">
    <property type="nucleotide sequence ID" value="NC_009487.1"/>
</dbReference>
<dbReference type="SMR" id="A5IU68"/>
<dbReference type="GeneID" id="98346286"/>
<dbReference type="KEGG" id="saj:SaurJH9_1956"/>
<dbReference type="HOGENOM" id="CLU_105899_1_2_9"/>
<dbReference type="GO" id="GO:0050566">
    <property type="term" value="F:asparaginyl-tRNA synthase (glutamine-hydrolyzing) activity"/>
    <property type="evidence" value="ECO:0007669"/>
    <property type="project" value="RHEA"/>
</dbReference>
<dbReference type="GO" id="GO:0005524">
    <property type="term" value="F:ATP binding"/>
    <property type="evidence" value="ECO:0007669"/>
    <property type="project" value="UniProtKB-KW"/>
</dbReference>
<dbReference type="GO" id="GO:0050567">
    <property type="term" value="F:glutaminyl-tRNA synthase (glutamine-hydrolyzing) activity"/>
    <property type="evidence" value="ECO:0007669"/>
    <property type="project" value="UniProtKB-UniRule"/>
</dbReference>
<dbReference type="GO" id="GO:0070681">
    <property type="term" value="P:glutaminyl-tRNAGln biosynthesis via transamidation"/>
    <property type="evidence" value="ECO:0007669"/>
    <property type="project" value="TreeGrafter"/>
</dbReference>
<dbReference type="GO" id="GO:0006450">
    <property type="term" value="P:regulation of translational fidelity"/>
    <property type="evidence" value="ECO:0007669"/>
    <property type="project" value="InterPro"/>
</dbReference>
<dbReference type="GO" id="GO:0006412">
    <property type="term" value="P:translation"/>
    <property type="evidence" value="ECO:0007669"/>
    <property type="project" value="UniProtKB-UniRule"/>
</dbReference>
<dbReference type="Gene3D" id="1.10.20.60">
    <property type="entry name" value="Glu-tRNAGln amidotransferase C subunit, N-terminal domain"/>
    <property type="match status" value="1"/>
</dbReference>
<dbReference type="HAMAP" id="MF_00122">
    <property type="entry name" value="GatC"/>
    <property type="match status" value="1"/>
</dbReference>
<dbReference type="InterPro" id="IPR036113">
    <property type="entry name" value="Asp/Glu-ADT_sf_sub_c"/>
</dbReference>
<dbReference type="InterPro" id="IPR003837">
    <property type="entry name" value="GatC"/>
</dbReference>
<dbReference type="NCBIfam" id="TIGR00135">
    <property type="entry name" value="gatC"/>
    <property type="match status" value="1"/>
</dbReference>
<dbReference type="PANTHER" id="PTHR15004">
    <property type="entry name" value="GLUTAMYL-TRNA(GLN) AMIDOTRANSFERASE SUBUNIT C, MITOCHONDRIAL"/>
    <property type="match status" value="1"/>
</dbReference>
<dbReference type="PANTHER" id="PTHR15004:SF0">
    <property type="entry name" value="GLUTAMYL-TRNA(GLN) AMIDOTRANSFERASE SUBUNIT C, MITOCHONDRIAL"/>
    <property type="match status" value="1"/>
</dbReference>
<dbReference type="Pfam" id="PF02686">
    <property type="entry name" value="GatC"/>
    <property type="match status" value="1"/>
</dbReference>
<dbReference type="SUPFAM" id="SSF141000">
    <property type="entry name" value="Glu-tRNAGln amidotransferase C subunit"/>
    <property type="match status" value="1"/>
</dbReference>
<reference key="1">
    <citation type="submission" date="2007-05" db="EMBL/GenBank/DDBJ databases">
        <title>Complete sequence of chromosome of Staphylococcus aureus subsp. aureus JH9.</title>
        <authorList>
            <consortium name="US DOE Joint Genome Institute"/>
            <person name="Copeland A."/>
            <person name="Lucas S."/>
            <person name="Lapidus A."/>
            <person name="Barry K."/>
            <person name="Detter J.C."/>
            <person name="Glavina del Rio T."/>
            <person name="Hammon N."/>
            <person name="Israni S."/>
            <person name="Pitluck S."/>
            <person name="Chain P."/>
            <person name="Malfatti S."/>
            <person name="Shin M."/>
            <person name="Vergez L."/>
            <person name="Schmutz J."/>
            <person name="Larimer F."/>
            <person name="Land M."/>
            <person name="Hauser L."/>
            <person name="Kyrpides N."/>
            <person name="Kim E."/>
            <person name="Tomasz A."/>
            <person name="Richardson P."/>
        </authorList>
    </citation>
    <scope>NUCLEOTIDE SEQUENCE [LARGE SCALE GENOMIC DNA]</scope>
    <source>
        <strain>JH9</strain>
    </source>
</reference>
<feature type="chain" id="PRO_1000076198" description="Aspartyl/glutamyl-tRNA(Asn/Gln) amidotransferase subunit C">
    <location>
        <begin position="1"/>
        <end position="100"/>
    </location>
</feature>
<keyword id="KW-0067">ATP-binding</keyword>
<keyword id="KW-0436">Ligase</keyword>
<keyword id="KW-0547">Nucleotide-binding</keyword>
<keyword id="KW-0648">Protein biosynthesis</keyword>
<accession>A5IU68</accession>